<keyword id="KW-0963">Cytoplasm</keyword>
<keyword id="KW-0460">Magnesium</keyword>
<keyword id="KW-0479">Metal-binding</keyword>
<keyword id="KW-0548">Nucleotidyltransferase</keyword>
<keyword id="KW-1185">Reference proteome</keyword>
<keyword id="KW-0694">RNA-binding</keyword>
<keyword id="KW-0808">Transferase</keyword>
<reference key="1">
    <citation type="journal article" date="2001" name="Science">
        <title>Comparative genomics of Listeria species.</title>
        <authorList>
            <person name="Glaser P."/>
            <person name="Frangeul L."/>
            <person name="Buchrieser C."/>
            <person name="Rusniok C."/>
            <person name="Amend A."/>
            <person name="Baquero F."/>
            <person name="Berche P."/>
            <person name="Bloecker H."/>
            <person name="Brandt P."/>
            <person name="Chakraborty T."/>
            <person name="Charbit A."/>
            <person name="Chetouani F."/>
            <person name="Couve E."/>
            <person name="de Daruvar A."/>
            <person name="Dehoux P."/>
            <person name="Domann E."/>
            <person name="Dominguez-Bernal G."/>
            <person name="Duchaud E."/>
            <person name="Durant L."/>
            <person name="Dussurget O."/>
            <person name="Entian K.-D."/>
            <person name="Fsihi H."/>
            <person name="Garcia-del Portillo F."/>
            <person name="Garrido P."/>
            <person name="Gautier L."/>
            <person name="Goebel W."/>
            <person name="Gomez-Lopez N."/>
            <person name="Hain T."/>
            <person name="Hauf J."/>
            <person name="Jackson D."/>
            <person name="Jones L.-M."/>
            <person name="Kaerst U."/>
            <person name="Kreft J."/>
            <person name="Kuhn M."/>
            <person name="Kunst F."/>
            <person name="Kurapkat G."/>
            <person name="Madueno E."/>
            <person name="Maitournam A."/>
            <person name="Mata Vicente J."/>
            <person name="Ng E."/>
            <person name="Nedjari H."/>
            <person name="Nordsiek G."/>
            <person name="Novella S."/>
            <person name="de Pablos B."/>
            <person name="Perez-Diaz J.-C."/>
            <person name="Purcell R."/>
            <person name="Remmel B."/>
            <person name="Rose M."/>
            <person name="Schlueter T."/>
            <person name="Simoes N."/>
            <person name="Tierrez A."/>
            <person name="Vazquez-Boland J.-A."/>
            <person name="Voss H."/>
            <person name="Wehland J."/>
            <person name="Cossart P."/>
        </authorList>
    </citation>
    <scope>NUCLEOTIDE SEQUENCE [LARGE SCALE GENOMIC DNA]</scope>
    <source>
        <strain>ATCC BAA-679 / EGD-e</strain>
    </source>
</reference>
<comment type="function">
    <text evidence="1">Involved in mRNA degradation. Catalyzes the phosphorolysis of single-stranded polyribonucleotides processively in the 3'- to 5'-direction.</text>
</comment>
<comment type="catalytic activity">
    <reaction evidence="1">
        <text>RNA(n+1) + phosphate = RNA(n) + a ribonucleoside 5'-diphosphate</text>
        <dbReference type="Rhea" id="RHEA:22096"/>
        <dbReference type="Rhea" id="RHEA-COMP:14527"/>
        <dbReference type="Rhea" id="RHEA-COMP:17342"/>
        <dbReference type="ChEBI" id="CHEBI:43474"/>
        <dbReference type="ChEBI" id="CHEBI:57930"/>
        <dbReference type="ChEBI" id="CHEBI:140395"/>
        <dbReference type="EC" id="2.7.7.8"/>
    </reaction>
</comment>
<comment type="cofactor">
    <cofactor evidence="1">
        <name>Mg(2+)</name>
        <dbReference type="ChEBI" id="CHEBI:18420"/>
    </cofactor>
</comment>
<comment type="subcellular location">
    <subcellularLocation>
        <location evidence="1">Cytoplasm</location>
    </subcellularLocation>
</comment>
<comment type="similarity">
    <text evidence="1">Belongs to the polyribonucleotide nucleotidyltransferase family.</text>
</comment>
<sequence>MSEKQVFSTEWAGKTLSVEVGQLAKQASGAALIRYGDTVVLTAAVGSKKPRPGDFFPLTVNYEEKMYSVGKVPGGFLKREGRPSDRATLTARLIDRPIRPLFAEGFRNEVQITSTVFSVDQDCSPEMAAMLGSSVALVISDIPFEGPIAGVDVGRIDGKYVINPTIEQAEKSDISLTVAGTYDAINMVEAGAKEVSEEAMLEAIMFGHEEIKRLCEFQQQIIAAVGKEKREIELFVSDPELEAEVKAASEGKMKTAIKTEEKKAREAAIEEVKEEILESYKAKELENESEILSEVAHILEMIEKDEMRRLISQDKIRPDGRKVNEIRPLSSEVGMLPRVHGSGLFTRGQTQALSVCTLAPLREHQIIDGLGTEEYKRFMHHYNFPQFSVGETGPRRAPGRREIGHGALGERALQYVIPSEEEFPYTIRLVSEVLESNGSSSQASICGSTLAMLDAGVPIKAPVAGIAMGLVKLGDDYTILSDIQGMEDHFGDMDFKVAGTKDGITALQMDIKIDGLSRQILDEALTQAKEGRLHILEHLTSTISAPREELSAYAPKIITLNIKPEKIKDVIGPGGKQINAIIDETGVKIDIEQDGTVYIASQDQAMNRKAIAIIEDIVREVEVGEVYTGKVRRIEKFGAFVELFKGTDGLVHISELAHERVGKVEDILKLGDEVTVKVIEVDQQGRVNLSRKALLEKKEQPEGDKKPQAEKKFYPKTKKPESK</sequence>
<protein>
    <recommendedName>
        <fullName evidence="1">Polyribonucleotide nucleotidyltransferase</fullName>
        <ecNumber evidence="1">2.7.7.8</ecNumber>
    </recommendedName>
    <alternativeName>
        <fullName evidence="1">Polynucleotide phosphorylase</fullName>
        <shortName evidence="1">PNPase</shortName>
    </alternativeName>
</protein>
<gene>
    <name evidence="1" type="primary">pnp</name>
    <name type="ordered locus">lmo1331</name>
</gene>
<evidence type="ECO:0000255" key="1">
    <source>
        <dbReference type="HAMAP-Rule" id="MF_01595"/>
    </source>
</evidence>
<evidence type="ECO:0000256" key="2">
    <source>
        <dbReference type="SAM" id="MobiDB-lite"/>
    </source>
</evidence>
<dbReference type="EC" id="2.7.7.8" evidence="1"/>
<dbReference type="EMBL" id="AL591978">
    <property type="protein sequence ID" value="CAC99409.1"/>
    <property type="molecule type" value="Genomic_DNA"/>
</dbReference>
<dbReference type="PIR" id="AC1241">
    <property type="entry name" value="AC1241"/>
</dbReference>
<dbReference type="RefSeq" id="WP_003722460.1">
    <property type="nucleotide sequence ID" value="NZ_CP149495.1"/>
</dbReference>
<dbReference type="SMR" id="Q8Y7F1"/>
<dbReference type="STRING" id="169963.gene:17593988"/>
<dbReference type="PaxDb" id="169963-lmo1331"/>
<dbReference type="EnsemblBacteria" id="CAC99409">
    <property type="protein sequence ID" value="CAC99409"/>
    <property type="gene ID" value="CAC99409"/>
</dbReference>
<dbReference type="KEGG" id="lmo:lmo1331"/>
<dbReference type="PATRIC" id="fig|169963.11.peg.1368"/>
<dbReference type="eggNOG" id="COG1185">
    <property type="taxonomic scope" value="Bacteria"/>
</dbReference>
<dbReference type="HOGENOM" id="CLU_004217_2_2_9"/>
<dbReference type="OrthoDB" id="9804305at2"/>
<dbReference type="PhylomeDB" id="Q8Y7F1"/>
<dbReference type="BioCyc" id="LMON169963:LMO1331-MONOMER"/>
<dbReference type="Proteomes" id="UP000000817">
    <property type="component" value="Chromosome"/>
</dbReference>
<dbReference type="GO" id="GO:0005829">
    <property type="term" value="C:cytosol"/>
    <property type="evidence" value="ECO:0000318"/>
    <property type="project" value="GO_Central"/>
</dbReference>
<dbReference type="GO" id="GO:0000175">
    <property type="term" value="F:3'-5'-RNA exonuclease activity"/>
    <property type="evidence" value="ECO:0000318"/>
    <property type="project" value="GO_Central"/>
</dbReference>
<dbReference type="GO" id="GO:0000287">
    <property type="term" value="F:magnesium ion binding"/>
    <property type="evidence" value="ECO:0007669"/>
    <property type="project" value="UniProtKB-UniRule"/>
</dbReference>
<dbReference type="GO" id="GO:0004654">
    <property type="term" value="F:polyribonucleotide nucleotidyltransferase activity"/>
    <property type="evidence" value="ECO:0000318"/>
    <property type="project" value="GO_Central"/>
</dbReference>
<dbReference type="GO" id="GO:0003723">
    <property type="term" value="F:RNA binding"/>
    <property type="evidence" value="ECO:0007669"/>
    <property type="project" value="UniProtKB-UniRule"/>
</dbReference>
<dbReference type="GO" id="GO:0006402">
    <property type="term" value="P:mRNA catabolic process"/>
    <property type="evidence" value="ECO:0007669"/>
    <property type="project" value="UniProtKB-UniRule"/>
</dbReference>
<dbReference type="GO" id="GO:0006401">
    <property type="term" value="P:RNA catabolic process"/>
    <property type="evidence" value="ECO:0000318"/>
    <property type="project" value="GO_Central"/>
</dbReference>
<dbReference type="GO" id="GO:0006396">
    <property type="term" value="P:RNA processing"/>
    <property type="evidence" value="ECO:0007669"/>
    <property type="project" value="InterPro"/>
</dbReference>
<dbReference type="CDD" id="cd02393">
    <property type="entry name" value="KH-I_PNPase"/>
    <property type="match status" value="1"/>
</dbReference>
<dbReference type="CDD" id="cd11363">
    <property type="entry name" value="RNase_PH_PNPase_1"/>
    <property type="match status" value="1"/>
</dbReference>
<dbReference type="CDD" id="cd11364">
    <property type="entry name" value="RNase_PH_PNPase_2"/>
    <property type="match status" value="1"/>
</dbReference>
<dbReference type="CDD" id="cd04472">
    <property type="entry name" value="S1_PNPase"/>
    <property type="match status" value="1"/>
</dbReference>
<dbReference type="FunFam" id="2.40.50.140:FF:000023">
    <property type="entry name" value="Polyribonucleotide nucleotidyltransferase"/>
    <property type="match status" value="1"/>
</dbReference>
<dbReference type="FunFam" id="3.30.1370.10:FF:000001">
    <property type="entry name" value="Polyribonucleotide nucleotidyltransferase"/>
    <property type="match status" value="1"/>
</dbReference>
<dbReference type="FunFam" id="3.30.230.70:FF:000001">
    <property type="entry name" value="Polyribonucleotide nucleotidyltransferase"/>
    <property type="match status" value="1"/>
</dbReference>
<dbReference type="FunFam" id="3.30.230.70:FF:000002">
    <property type="entry name" value="Polyribonucleotide nucleotidyltransferase"/>
    <property type="match status" value="1"/>
</dbReference>
<dbReference type="Gene3D" id="3.30.230.70">
    <property type="entry name" value="GHMP Kinase, N-terminal domain"/>
    <property type="match status" value="2"/>
</dbReference>
<dbReference type="Gene3D" id="3.30.1370.10">
    <property type="entry name" value="K Homology domain, type 1"/>
    <property type="match status" value="1"/>
</dbReference>
<dbReference type="Gene3D" id="2.40.50.140">
    <property type="entry name" value="Nucleic acid-binding proteins"/>
    <property type="match status" value="1"/>
</dbReference>
<dbReference type="HAMAP" id="MF_01595">
    <property type="entry name" value="PNPase"/>
    <property type="match status" value="1"/>
</dbReference>
<dbReference type="InterPro" id="IPR001247">
    <property type="entry name" value="ExoRNase_PH_dom1"/>
</dbReference>
<dbReference type="InterPro" id="IPR015847">
    <property type="entry name" value="ExoRNase_PH_dom2"/>
</dbReference>
<dbReference type="InterPro" id="IPR036345">
    <property type="entry name" value="ExoRNase_PH_dom2_sf"/>
</dbReference>
<dbReference type="InterPro" id="IPR004087">
    <property type="entry name" value="KH_dom"/>
</dbReference>
<dbReference type="InterPro" id="IPR004088">
    <property type="entry name" value="KH_dom_type_1"/>
</dbReference>
<dbReference type="InterPro" id="IPR036612">
    <property type="entry name" value="KH_dom_type_1_sf"/>
</dbReference>
<dbReference type="InterPro" id="IPR012340">
    <property type="entry name" value="NA-bd_OB-fold"/>
</dbReference>
<dbReference type="InterPro" id="IPR012162">
    <property type="entry name" value="PNPase"/>
</dbReference>
<dbReference type="InterPro" id="IPR027408">
    <property type="entry name" value="PNPase/RNase_PH_dom_sf"/>
</dbReference>
<dbReference type="InterPro" id="IPR015848">
    <property type="entry name" value="PNPase_PH_RNA-bd_bac/org-type"/>
</dbReference>
<dbReference type="InterPro" id="IPR036456">
    <property type="entry name" value="PNPase_PH_RNA-bd_sf"/>
</dbReference>
<dbReference type="InterPro" id="IPR020568">
    <property type="entry name" value="Ribosomal_Su5_D2-typ_SF"/>
</dbReference>
<dbReference type="InterPro" id="IPR003029">
    <property type="entry name" value="S1_domain"/>
</dbReference>
<dbReference type="NCBIfam" id="TIGR03591">
    <property type="entry name" value="polynuc_phos"/>
    <property type="match status" value="1"/>
</dbReference>
<dbReference type="NCBIfam" id="NF008805">
    <property type="entry name" value="PRK11824.1"/>
    <property type="match status" value="1"/>
</dbReference>
<dbReference type="PANTHER" id="PTHR11252">
    <property type="entry name" value="POLYRIBONUCLEOTIDE NUCLEOTIDYLTRANSFERASE"/>
    <property type="match status" value="1"/>
</dbReference>
<dbReference type="PANTHER" id="PTHR11252:SF0">
    <property type="entry name" value="POLYRIBONUCLEOTIDE NUCLEOTIDYLTRANSFERASE 1, MITOCHONDRIAL"/>
    <property type="match status" value="1"/>
</dbReference>
<dbReference type="Pfam" id="PF00013">
    <property type="entry name" value="KH_1"/>
    <property type="match status" value="1"/>
</dbReference>
<dbReference type="Pfam" id="PF03726">
    <property type="entry name" value="PNPase"/>
    <property type="match status" value="1"/>
</dbReference>
<dbReference type="Pfam" id="PF01138">
    <property type="entry name" value="RNase_PH"/>
    <property type="match status" value="2"/>
</dbReference>
<dbReference type="Pfam" id="PF03725">
    <property type="entry name" value="RNase_PH_C"/>
    <property type="match status" value="2"/>
</dbReference>
<dbReference type="Pfam" id="PF00575">
    <property type="entry name" value="S1"/>
    <property type="match status" value="1"/>
</dbReference>
<dbReference type="PIRSF" id="PIRSF005499">
    <property type="entry name" value="PNPase"/>
    <property type="match status" value="1"/>
</dbReference>
<dbReference type="SMART" id="SM00322">
    <property type="entry name" value="KH"/>
    <property type="match status" value="1"/>
</dbReference>
<dbReference type="SMART" id="SM00316">
    <property type="entry name" value="S1"/>
    <property type="match status" value="1"/>
</dbReference>
<dbReference type="SUPFAM" id="SSF54791">
    <property type="entry name" value="Eukaryotic type KH-domain (KH-domain type I)"/>
    <property type="match status" value="1"/>
</dbReference>
<dbReference type="SUPFAM" id="SSF50249">
    <property type="entry name" value="Nucleic acid-binding proteins"/>
    <property type="match status" value="1"/>
</dbReference>
<dbReference type="SUPFAM" id="SSF46915">
    <property type="entry name" value="Polynucleotide phosphorylase/guanosine pentaphosphate synthase (PNPase/GPSI), domain 3"/>
    <property type="match status" value="1"/>
</dbReference>
<dbReference type="SUPFAM" id="SSF55666">
    <property type="entry name" value="Ribonuclease PH domain 2-like"/>
    <property type="match status" value="2"/>
</dbReference>
<dbReference type="SUPFAM" id="SSF54211">
    <property type="entry name" value="Ribosomal protein S5 domain 2-like"/>
    <property type="match status" value="2"/>
</dbReference>
<dbReference type="PROSITE" id="PS50084">
    <property type="entry name" value="KH_TYPE_1"/>
    <property type="match status" value="1"/>
</dbReference>
<dbReference type="PROSITE" id="PS50126">
    <property type="entry name" value="S1"/>
    <property type="match status" value="1"/>
</dbReference>
<name>PNP_LISMO</name>
<organism>
    <name type="scientific">Listeria monocytogenes serovar 1/2a (strain ATCC BAA-679 / EGD-e)</name>
    <dbReference type="NCBI Taxonomy" id="169963"/>
    <lineage>
        <taxon>Bacteria</taxon>
        <taxon>Bacillati</taxon>
        <taxon>Bacillota</taxon>
        <taxon>Bacilli</taxon>
        <taxon>Bacillales</taxon>
        <taxon>Listeriaceae</taxon>
        <taxon>Listeria</taxon>
    </lineage>
</organism>
<proteinExistence type="inferred from homology"/>
<feature type="chain" id="PRO_0000329702" description="Polyribonucleotide nucleotidyltransferase">
    <location>
        <begin position="1"/>
        <end position="723"/>
    </location>
</feature>
<feature type="domain" description="KH" evidence="1">
    <location>
        <begin position="555"/>
        <end position="614"/>
    </location>
</feature>
<feature type="domain" description="S1 motif" evidence="1">
    <location>
        <begin position="624"/>
        <end position="692"/>
    </location>
</feature>
<feature type="region of interest" description="Disordered" evidence="2">
    <location>
        <begin position="692"/>
        <end position="723"/>
    </location>
</feature>
<feature type="compositionally biased region" description="Basic and acidic residues" evidence="2">
    <location>
        <begin position="693"/>
        <end position="723"/>
    </location>
</feature>
<feature type="binding site" evidence="1">
    <location>
        <position position="488"/>
    </location>
    <ligand>
        <name>Mg(2+)</name>
        <dbReference type="ChEBI" id="CHEBI:18420"/>
    </ligand>
</feature>
<feature type="binding site" evidence="1">
    <location>
        <position position="494"/>
    </location>
    <ligand>
        <name>Mg(2+)</name>
        <dbReference type="ChEBI" id="CHEBI:18420"/>
    </ligand>
</feature>
<accession>Q8Y7F1</accession>